<gene>
    <name type="ordered locus">BB_0247</name>
</gene>
<organism>
    <name type="scientific">Borreliella burgdorferi (strain ATCC 35210 / DSM 4680 / CIP 102532 / B31)</name>
    <name type="common">Borrelia burgdorferi</name>
    <dbReference type="NCBI Taxonomy" id="224326"/>
    <lineage>
        <taxon>Bacteria</taxon>
        <taxon>Pseudomonadati</taxon>
        <taxon>Spirochaetota</taxon>
        <taxon>Spirochaetia</taxon>
        <taxon>Spirochaetales</taxon>
        <taxon>Borreliaceae</taxon>
        <taxon>Borreliella</taxon>
    </lineage>
</organism>
<name>IXTPA_BORBU</name>
<evidence type="ECO:0000255" key="1">
    <source>
        <dbReference type="HAMAP-Rule" id="MF_01405"/>
    </source>
</evidence>
<accession>O51263</accession>
<sequence length="201" mass="23138">MKTLFFATTNENKINEVKNILDIPNLNLIVPQNFNIKETGKTFKENSLLKAKALFEILNNNQNVFGEDSGLCIEALNLEPGIYSKRYDTYKLCKKLSTNEKNQLILDLMKNEKNRKAYFICNISYISKNGQILNFEGIIKGKIALSLNDKKNYGFGYDSIFLTKNNKKLSDLTLEEKNKISHRGIAFLKFKKFLLKSLFNS</sequence>
<dbReference type="EC" id="3.6.1.66" evidence="1"/>
<dbReference type="EMBL" id="AE000783">
    <property type="protein sequence ID" value="AAB91499.1"/>
    <property type="molecule type" value="Genomic_DNA"/>
</dbReference>
<dbReference type="PIR" id="G70130">
    <property type="entry name" value="G70130"/>
</dbReference>
<dbReference type="RefSeq" id="NP_212381.1">
    <property type="nucleotide sequence ID" value="NC_001318.1"/>
</dbReference>
<dbReference type="SMR" id="O51263"/>
<dbReference type="STRING" id="224326.BB_0247"/>
<dbReference type="PaxDb" id="224326-BB_0247"/>
<dbReference type="EnsemblBacteria" id="AAB91499">
    <property type="protein sequence ID" value="AAB91499"/>
    <property type="gene ID" value="BB_0247"/>
</dbReference>
<dbReference type="KEGG" id="bbu:BB_0247"/>
<dbReference type="PATRIC" id="fig|224326.49.peg.646"/>
<dbReference type="HOGENOM" id="CLU_082080_0_2_12"/>
<dbReference type="OrthoDB" id="9807456at2"/>
<dbReference type="Proteomes" id="UP000001807">
    <property type="component" value="Chromosome"/>
</dbReference>
<dbReference type="GO" id="GO:0005829">
    <property type="term" value="C:cytosol"/>
    <property type="evidence" value="ECO:0007669"/>
    <property type="project" value="TreeGrafter"/>
</dbReference>
<dbReference type="GO" id="GO:0035870">
    <property type="term" value="F:dITP diphosphatase activity"/>
    <property type="evidence" value="ECO:0007669"/>
    <property type="project" value="RHEA"/>
</dbReference>
<dbReference type="GO" id="GO:0036220">
    <property type="term" value="F:ITP diphosphatase activity"/>
    <property type="evidence" value="ECO:0007669"/>
    <property type="project" value="UniProtKB-EC"/>
</dbReference>
<dbReference type="GO" id="GO:0046872">
    <property type="term" value="F:metal ion binding"/>
    <property type="evidence" value="ECO:0007669"/>
    <property type="project" value="UniProtKB-KW"/>
</dbReference>
<dbReference type="GO" id="GO:0000166">
    <property type="term" value="F:nucleotide binding"/>
    <property type="evidence" value="ECO:0007669"/>
    <property type="project" value="UniProtKB-KW"/>
</dbReference>
<dbReference type="GO" id="GO:0017111">
    <property type="term" value="F:ribonucleoside triphosphate phosphatase activity"/>
    <property type="evidence" value="ECO:0007669"/>
    <property type="project" value="InterPro"/>
</dbReference>
<dbReference type="GO" id="GO:0036222">
    <property type="term" value="F:XTP diphosphatase activity"/>
    <property type="evidence" value="ECO:0007669"/>
    <property type="project" value="RHEA"/>
</dbReference>
<dbReference type="GO" id="GO:0009117">
    <property type="term" value="P:nucleotide metabolic process"/>
    <property type="evidence" value="ECO:0007669"/>
    <property type="project" value="UniProtKB-KW"/>
</dbReference>
<dbReference type="GO" id="GO:0009146">
    <property type="term" value="P:purine nucleoside triphosphate catabolic process"/>
    <property type="evidence" value="ECO:0007669"/>
    <property type="project" value="UniProtKB-UniRule"/>
</dbReference>
<dbReference type="CDD" id="cd00515">
    <property type="entry name" value="HAM1"/>
    <property type="match status" value="1"/>
</dbReference>
<dbReference type="FunFam" id="3.90.950.10:FF:000001">
    <property type="entry name" value="dITP/XTP pyrophosphatase"/>
    <property type="match status" value="1"/>
</dbReference>
<dbReference type="Gene3D" id="3.90.950.10">
    <property type="match status" value="1"/>
</dbReference>
<dbReference type="HAMAP" id="MF_01405">
    <property type="entry name" value="Non_canon_purine_NTPase"/>
    <property type="match status" value="1"/>
</dbReference>
<dbReference type="InterPro" id="IPR020922">
    <property type="entry name" value="dITP/XTP_pyrophosphatase"/>
</dbReference>
<dbReference type="InterPro" id="IPR029001">
    <property type="entry name" value="ITPase-like_fam"/>
</dbReference>
<dbReference type="InterPro" id="IPR002637">
    <property type="entry name" value="RdgB/HAM1"/>
</dbReference>
<dbReference type="NCBIfam" id="NF011400">
    <property type="entry name" value="PRK14825.1"/>
    <property type="match status" value="1"/>
</dbReference>
<dbReference type="NCBIfam" id="TIGR00042">
    <property type="entry name" value="RdgB/HAM1 family non-canonical purine NTP pyrophosphatase"/>
    <property type="match status" value="1"/>
</dbReference>
<dbReference type="PANTHER" id="PTHR11067:SF9">
    <property type="entry name" value="INOSINE TRIPHOSPHATE PYROPHOSPHATASE"/>
    <property type="match status" value="1"/>
</dbReference>
<dbReference type="PANTHER" id="PTHR11067">
    <property type="entry name" value="INOSINE TRIPHOSPHATE PYROPHOSPHATASE/HAM1 PROTEIN"/>
    <property type="match status" value="1"/>
</dbReference>
<dbReference type="Pfam" id="PF01725">
    <property type="entry name" value="Ham1p_like"/>
    <property type="match status" value="1"/>
</dbReference>
<dbReference type="SUPFAM" id="SSF52972">
    <property type="entry name" value="ITPase-like"/>
    <property type="match status" value="1"/>
</dbReference>
<protein>
    <recommendedName>
        <fullName evidence="1">dITP/XTP pyrophosphatase</fullName>
        <ecNumber evidence="1">3.6.1.66</ecNumber>
    </recommendedName>
    <alternativeName>
        <fullName evidence="1">Non-canonical purine NTP pyrophosphatase</fullName>
    </alternativeName>
    <alternativeName>
        <fullName evidence="1">Non-standard purine NTP pyrophosphatase</fullName>
    </alternativeName>
    <alternativeName>
        <fullName evidence="1">Nucleoside-triphosphate diphosphatase</fullName>
    </alternativeName>
    <alternativeName>
        <fullName evidence="1">Nucleoside-triphosphate pyrophosphatase</fullName>
        <shortName evidence="1">NTPase</shortName>
    </alternativeName>
</protein>
<reference key="1">
    <citation type="journal article" date="1997" name="Nature">
        <title>Genomic sequence of a Lyme disease spirochaete, Borrelia burgdorferi.</title>
        <authorList>
            <person name="Fraser C.M."/>
            <person name="Casjens S."/>
            <person name="Huang W.M."/>
            <person name="Sutton G.G."/>
            <person name="Clayton R.A."/>
            <person name="Lathigra R."/>
            <person name="White O."/>
            <person name="Ketchum K.A."/>
            <person name="Dodson R.J."/>
            <person name="Hickey E.K."/>
            <person name="Gwinn M.L."/>
            <person name="Dougherty B.A."/>
            <person name="Tomb J.-F."/>
            <person name="Fleischmann R.D."/>
            <person name="Richardson D.L."/>
            <person name="Peterson J.D."/>
            <person name="Kerlavage A.R."/>
            <person name="Quackenbush J."/>
            <person name="Salzberg S.L."/>
            <person name="Hanson M."/>
            <person name="van Vugt R."/>
            <person name="Palmer N."/>
            <person name="Adams M.D."/>
            <person name="Gocayne J.D."/>
            <person name="Weidman J.F."/>
            <person name="Utterback T.R."/>
            <person name="Watthey L."/>
            <person name="McDonald L.A."/>
            <person name="Artiach P."/>
            <person name="Bowman C."/>
            <person name="Garland S.A."/>
            <person name="Fujii C."/>
            <person name="Cotton M.D."/>
            <person name="Horst K."/>
            <person name="Roberts K.M."/>
            <person name="Hatch B."/>
            <person name="Smith H.O."/>
            <person name="Venter J.C."/>
        </authorList>
    </citation>
    <scope>NUCLEOTIDE SEQUENCE [LARGE SCALE GENOMIC DNA]</scope>
    <source>
        <strain>ATCC 35210 / DSM 4680 / CIP 102532 / B31</strain>
    </source>
</reference>
<feature type="chain" id="PRO_0000178136" description="dITP/XTP pyrophosphatase">
    <location>
        <begin position="1"/>
        <end position="201"/>
    </location>
</feature>
<feature type="active site" description="Proton acceptor" evidence="1">
    <location>
        <position position="68"/>
    </location>
</feature>
<feature type="binding site" evidence="1">
    <location>
        <begin position="8"/>
        <end position="13"/>
    </location>
    <ligand>
        <name>substrate</name>
    </ligand>
</feature>
<feature type="binding site" evidence="1">
    <location>
        <position position="68"/>
    </location>
    <ligand>
        <name>Mg(2+)</name>
        <dbReference type="ChEBI" id="CHEBI:18420"/>
    </ligand>
</feature>
<feature type="binding site" evidence="1">
    <location>
        <position position="69"/>
    </location>
    <ligand>
        <name>substrate</name>
    </ligand>
</feature>
<feature type="binding site" evidence="1">
    <location>
        <begin position="155"/>
        <end position="158"/>
    </location>
    <ligand>
        <name>substrate</name>
    </ligand>
</feature>
<feature type="binding site" evidence="1">
    <location>
        <position position="177"/>
    </location>
    <ligand>
        <name>substrate</name>
    </ligand>
</feature>
<feature type="binding site" evidence="1">
    <location>
        <begin position="182"/>
        <end position="183"/>
    </location>
    <ligand>
        <name>substrate</name>
    </ligand>
</feature>
<keyword id="KW-0378">Hydrolase</keyword>
<keyword id="KW-0460">Magnesium</keyword>
<keyword id="KW-0479">Metal-binding</keyword>
<keyword id="KW-0546">Nucleotide metabolism</keyword>
<keyword id="KW-0547">Nucleotide-binding</keyword>
<keyword id="KW-1185">Reference proteome</keyword>
<proteinExistence type="inferred from homology"/>
<comment type="function">
    <text evidence="1">Pyrophosphatase that catalyzes the hydrolysis of nucleoside triphosphates to their monophosphate derivatives, with a high preference for the non-canonical purine nucleotides XTP (xanthosine triphosphate), dITP (deoxyinosine triphosphate) and ITP. Seems to function as a house-cleaning enzyme that removes non-canonical purine nucleotides from the nucleotide pool, thus preventing their incorporation into DNA/RNA and avoiding chromosomal lesions.</text>
</comment>
<comment type="catalytic activity">
    <reaction evidence="1">
        <text>XTP + H2O = XMP + diphosphate + H(+)</text>
        <dbReference type="Rhea" id="RHEA:28610"/>
        <dbReference type="ChEBI" id="CHEBI:15377"/>
        <dbReference type="ChEBI" id="CHEBI:15378"/>
        <dbReference type="ChEBI" id="CHEBI:33019"/>
        <dbReference type="ChEBI" id="CHEBI:57464"/>
        <dbReference type="ChEBI" id="CHEBI:61314"/>
        <dbReference type="EC" id="3.6.1.66"/>
    </reaction>
</comment>
<comment type="catalytic activity">
    <reaction evidence="1">
        <text>dITP + H2O = dIMP + diphosphate + H(+)</text>
        <dbReference type="Rhea" id="RHEA:28342"/>
        <dbReference type="ChEBI" id="CHEBI:15377"/>
        <dbReference type="ChEBI" id="CHEBI:15378"/>
        <dbReference type="ChEBI" id="CHEBI:33019"/>
        <dbReference type="ChEBI" id="CHEBI:61194"/>
        <dbReference type="ChEBI" id="CHEBI:61382"/>
        <dbReference type="EC" id="3.6.1.66"/>
    </reaction>
</comment>
<comment type="catalytic activity">
    <reaction evidence="1">
        <text>ITP + H2O = IMP + diphosphate + H(+)</text>
        <dbReference type="Rhea" id="RHEA:29399"/>
        <dbReference type="ChEBI" id="CHEBI:15377"/>
        <dbReference type="ChEBI" id="CHEBI:15378"/>
        <dbReference type="ChEBI" id="CHEBI:33019"/>
        <dbReference type="ChEBI" id="CHEBI:58053"/>
        <dbReference type="ChEBI" id="CHEBI:61402"/>
        <dbReference type="EC" id="3.6.1.66"/>
    </reaction>
</comment>
<comment type="cofactor">
    <cofactor evidence="1">
        <name>Mg(2+)</name>
        <dbReference type="ChEBI" id="CHEBI:18420"/>
    </cofactor>
    <text evidence="1">Binds 1 Mg(2+) ion per subunit.</text>
</comment>
<comment type="subunit">
    <text evidence="1">Homodimer.</text>
</comment>
<comment type="similarity">
    <text evidence="1">Belongs to the HAM1 NTPase family.</text>
</comment>